<accession>P11741</accession>
<proteinExistence type="evidence at protein level"/>
<feature type="chain" id="PRO_0000064893" description="Bacteriochlorophyll a protein">
    <location>
        <begin position="1"/>
        <end position="366"/>
    </location>
</feature>
<feature type="binding site" description="axial binding residue">
    <location>
        <position position="110"/>
    </location>
    <ligand>
        <name>bacteriochlorophyll a</name>
        <dbReference type="ChEBI" id="CHEBI:61720"/>
        <label>1</label>
    </ligand>
    <ligandPart>
        <name>Mg</name>
        <dbReference type="ChEBI" id="CHEBI:25107"/>
    </ligandPart>
</feature>
<feature type="binding site" description="axial binding residue">
    <location>
        <position position="145"/>
    </location>
    <ligand>
        <name>bacteriochlorophyll a</name>
        <dbReference type="ChEBI" id="CHEBI:61720"/>
        <label>6</label>
    </ligand>
    <ligandPart>
        <name>Mg</name>
        <dbReference type="ChEBI" id="CHEBI:25107"/>
    </ligandPart>
</feature>
<feature type="binding site" description="axial binding residue">
    <location>
        <position position="290"/>
    </location>
    <ligand>
        <name>bacteriochlorophyll a</name>
        <dbReference type="ChEBI" id="CHEBI:61720"/>
        <label>4</label>
    </ligand>
    <ligandPart>
        <name>Mg</name>
        <dbReference type="ChEBI" id="CHEBI:25107"/>
    </ligandPart>
</feature>
<feature type="binding site" description="axial binding residue">
    <location>
        <position position="297"/>
    </location>
    <ligand>
        <name>bacteriochlorophyll a</name>
        <dbReference type="ChEBI" id="CHEBI:61720"/>
        <label>7</label>
    </ligand>
    <ligandPart>
        <name>Mg</name>
        <dbReference type="ChEBI" id="CHEBI:25107"/>
    </ligandPart>
</feature>
<feature type="binding site" description="axial binding residue">
    <location>
        <position position="298"/>
    </location>
    <ligand>
        <name>bacteriochlorophyll a</name>
        <dbReference type="ChEBI" id="CHEBI:61720"/>
        <label>3</label>
    </ligand>
    <ligandPart>
        <name>Mg</name>
        <dbReference type="ChEBI" id="CHEBI:25107"/>
    </ligandPart>
</feature>
<feature type="strand" evidence="1">
    <location>
        <begin position="10"/>
        <end position="19"/>
    </location>
</feature>
<feature type="strand" evidence="1">
    <location>
        <begin position="27"/>
        <end position="35"/>
    </location>
</feature>
<feature type="strand" evidence="1">
    <location>
        <begin position="42"/>
        <end position="56"/>
    </location>
</feature>
<feature type="turn" evidence="2">
    <location>
        <begin position="59"/>
        <end position="62"/>
    </location>
</feature>
<feature type="strand" evidence="1">
    <location>
        <begin position="64"/>
        <end position="74"/>
    </location>
</feature>
<feature type="strand" evidence="1">
    <location>
        <begin position="77"/>
        <end position="105"/>
    </location>
</feature>
<feature type="strand" evidence="1">
    <location>
        <begin position="108"/>
        <end position="124"/>
    </location>
</feature>
<feature type="helix" evidence="1">
    <location>
        <begin position="127"/>
        <end position="130"/>
    </location>
</feature>
<feature type="strand" evidence="1">
    <location>
        <begin position="141"/>
        <end position="152"/>
    </location>
</feature>
<feature type="helix" evidence="1">
    <location>
        <begin position="156"/>
        <end position="171"/>
    </location>
</feature>
<feature type="helix" evidence="1">
    <location>
        <begin position="173"/>
        <end position="184"/>
    </location>
</feature>
<feature type="turn" evidence="1">
    <location>
        <begin position="186"/>
        <end position="188"/>
    </location>
</feature>
<feature type="helix" evidence="1">
    <location>
        <begin position="189"/>
        <end position="195"/>
    </location>
</feature>
<feature type="strand" evidence="1">
    <location>
        <begin position="198"/>
        <end position="200"/>
    </location>
</feature>
<feature type="strand" evidence="1">
    <location>
        <begin position="204"/>
        <end position="211"/>
    </location>
</feature>
<feature type="strand" evidence="1">
    <location>
        <begin position="218"/>
        <end position="231"/>
    </location>
</feature>
<feature type="helix" evidence="1">
    <location>
        <begin position="234"/>
        <end position="237"/>
    </location>
</feature>
<feature type="turn" evidence="1">
    <location>
        <begin position="238"/>
        <end position="242"/>
    </location>
</feature>
<feature type="helix" evidence="1">
    <location>
        <begin position="245"/>
        <end position="247"/>
    </location>
</feature>
<feature type="strand" evidence="1">
    <location>
        <begin position="252"/>
        <end position="260"/>
    </location>
</feature>
<feature type="strand" evidence="1">
    <location>
        <begin position="265"/>
        <end position="273"/>
    </location>
</feature>
<feature type="strand" evidence="1">
    <location>
        <begin position="276"/>
        <end position="281"/>
    </location>
</feature>
<feature type="strand" evidence="1">
    <location>
        <begin position="284"/>
        <end position="287"/>
    </location>
</feature>
<feature type="helix" evidence="1">
    <location>
        <begin position="292"/>
        <end position="299"/>
    </location>
</feature>
<feature type="turn" evidence="1">
    <location>
        <begin position="300"/>
        <end position="303"/>
    </location>
</feature>
<feature type="strand" evidence="1">
    <location>
        <begin position="308"/>
        <end position="316"/>
    </location>
</feature>
<feature type="strand" evidence="1">
    <location>
        <begin position="322"/>
        <end position="328"/>
    </location>
</feature>
<feature type="strand" evidence="1">
    <location>
        <begin position="331"/>
        <end position="334"/>
    </location>
</feature>
<feature type="strand" evidence="1">
    <location>
        <begin position="337"/>
        <end position="342"/>
    </location>
</feature>
<feature type="helix" evidence="1">
    <location>
        <begin position="343"/>
        <end position="353"/>
    </location>
</feature>
<feature type="strand" evidence="1">
    <location>
        <begin position="361"/>
        <end position="365"/>
    </location>
</feature>
<keyword id="KW-0002">3D-structure</keyword>
<keyword id="KW-0076">Bacteriochlorophyll</keyword>
<keyword id="KW-0148">Chlorophyll</keyword>
<keyword id="KW-0157">Chromophore</keyword>
<keyword id="KW-0903">Direct protein sequencing</keyword>
<keyword id="KW-0249">Electron transport</keyword>
<keyword id="KW-0460">Magnesium</keyword>
<keyword id="KW-0479">Metal-binding</keyword>
<keyword id="KW-0602">Photosynthesis</keyword>
<keyword id="KW-0674">Reaction center</keyword>
<keyword id="KW-0813">Transport</keyword>
<comment type="function">
    <text>Intermediary in the transfer of excitation energy from the chlorophyll to the reaction centers.</text>
</comment>
<comment type="subunit">
    <text>Homotrimer. Each subunit contains 7 molecules of bacteriochlorophyll a.</text>
</comment>
<organism>
    <name type="scientific">Prosthecochloris aestuarii</name>
    <dbReference type="NCBI Taxonomy" id="1102"/>
    <lineage>
        <taxon>Bacteria</taxon>
        <taxon>Pseudomonadati</taxon>
        <taxon>Chlorobiota</taxon>
        <taxon>Chlorobiia</taxon>
        <taxon>Chlorobiales</taxon>
        <taxon>Chlorobiaceae</taxon>
        <taxon>Prosthecochloris</taxon>
    </lineage>
</organism>
<evidence type="ECO:0007829" key="1">
    <source>
        <dbReference type="PDB" id="3EOJ"/>
    </source>
</evidence>
<evidence type="ECO:0007829" key="2">
    <source>
        <dbReference type="PDB" id="6MEZ"/>
    </source>
</evidence>
<reference key="1">
    <citation type="journal article" date="1986" name="J. Biol. Chem.">
        <title>The complete amino acid sequence of a bacteriochlorophyll a-protein from Prosthecochloris aestuarii.</title>
        <authorList>
            <person name="Daurat-Larroque S.T."/>
            <person name="Brew K."/>
            <person name="Fenna R.E."/>
        </authorList>
    </citation>
    <scope>PROTEIN SEQUENCE</scope>
    <source>
        <strain>2K</strain>
    </source>
</reference>
<reference key="2">
    <citation type="journal article" date="1986" name="J. Mol. Biol.">
        <title>Structure and X-ray amino acid sequence of a bacteriochlorophyll a protein from Prosthecochloris aestuarii refined at 1.9-A resolution.</title>
        <authorList>
            <person name="Tronrud D.E."/>
            <person name="Schmid M.F."/>
            <person name="Matthews B.W."/>
        </authorList>
    </citation>
    <scope>X-RAY CRYSTALLOGRAPHY (1.9 ANGSTROMS)</scope>
    <scope>PARTIAL PROTEIN SEQUENCE</scope>
</reference>
<reference key="3">
    <citation type="journal article" date="1979" name="J. Mol. Biol.">
        <title>Structure of a bacteriochlorophyll a-protein from the green photosynthetic bacterium Prosthecochloris aestuarii.</title>
        <authorList>
            <person name="Matthews B.W."/>
            <person name="Fenna R.E."/>
            <person name="Bolognesi M.C."/>
            <person name="Schmid M.F."/>
            <person name="Olson J.M."/>
        </authorList>
    </citation>
    <scope>X-RAY CRYSTALLOGRAPHY (2.8 ANGSTROMS)</scope>
</reference>
<name>BCPA_PROAE</name>
<dbReference type="PIR" id="A25002">
    <property type="entry name" value="A25002"/>
</dbReference>
<dbReference type="PIR" id="A25330">
    <property type="entry name" value="A25330"/>
</dbReference>
<dbReference type="PDB" id="3EOJ">
    <property type="method" value="X-ray"/>
    <property type="resolution" value="1.30 A"/>
    <property type="chains" value="A=1-366"/>
</dbReference>
<dbReference type="PDB" id="4BCL">
    <property type="method" value="X-ray"/>
    <property type="resolution" value="1.90 A"/>
    <property type="chains" value="A=1-366"/>
</dbReference>
<dbReference type="PDB" id="6MEZ">
    <property type="method" value="X-ray"/>
    <property type="resolution" value="1.74 A"/>
    <property type="chains" value="A/B=7-366"/>
</dbReference>
<dbReference type="PDBsum" id="3EOJ"/>
<dbReference type="PDBsum" id="4BCL"/>
<dbReference type="PDBsum" id="6MEZ"/>
<dbReference type="SMR" id="P11741"/>
<dbReference type="DrugBank" id="DB01853">
    <property type="generic name" value="Bacteriochlorophyll A"/>
</dbReference>
<dbReference type="EvolutionaryTrace" id="P11741"/>
<dbReference type="GO" id="GO:0042314">
    <property type="term" value="F:bacteriochlorophyll binding"/>
    <property type="evidence" value="ECO:0007669"/>
    <property type="project" value="UniProtKB-KW"/>
</dbReference>
<dbReference type="GO" id="GO:0046872">
    <property type="term" value="F:metal ion binding"/>
    <property type="evidence" value="ECO:0007669"/>
    <property type="project" value="UniProtKB-KW"/>
</dbReference>
<dbReference type="GO" id="GO:0015979">
    <property type="term" value="P:photosynthesis"/>
    <property type="evidence" value="ECO:0007669"/>
    <property type="project" value="UniProtKB-KW"/>
</dbReference>
<dbReference type="Gene3D" id="2.50.10.10">
    <property type="entry name" value="Bacteriochlorophyll A"/>
    <property type="match status" value="1"/>
</dbReference>
<dbReference type="InterPro" id="IPR003426">
    <property type="entry name" value="BChl_A"/>
</dbReference>
<dbReference type="InterPro" id="IPR036559">
    <property type="entry name" value="Chl_A_sf"/>
</dbReference>
<dbReference type="Pfam" id="PF02327">
    <property type="entry name" value="BChl_A"/>
    <property type="match status" value="1"/>
</dbReference>
<dbReference type="SUPFAM" id="SSF51081">
    <property type="entry name" value="Bacteriochlorophyll A protein"/>
    <property type="match status" value="1"/>
</dbReference>
<sequence length="366" mass="40276">ALFGTKDTTTAHSDYEIILEGGSSSWGQVKGRAKVNVPAAIPLLPTDCNIRIDAKPLDAQKGVVRFTTKIESVVDSVKNTLNVEVDIANETKDRRIAVGEGSLSVGDFSHSFSFEGQVVNMYYYRSDAVRRNIPNPIYMQGRQFHDILMKVPLDNNDLVDTWEGFQQSISGGGANFGDWIREFWFIGPAFAAINEGGQRISPIVVNSSNVEGGEKGPVGVTRWKFSHAGSGVVDSISRWTELFPVEQLNKPASIEGGFRSDSQGIEVKVDGNLPGVSRDAGGGLRRILNHPLIPLVHHGMVGKFNDFTVDTQLKIVLPKGYKIRYAAPQFRSQNLEEYRWSGGAYARWVEHVCKGGTGQFEVLYAQ</sequence>
<protein>
    <recommendedName>
        <fullName>Bacteriochlorophyll a protein</fullName>
        <shortName>BCP</shortName>
        <shortName>BChl a protein</shortName>
    </recommendedName>
</protein>